<accession>P16838</accession>
<protein>
    <recommendedName>
        <fullName>Uncharacterized protein UL129</fullName>
    </recommendedName>
</protein>
<reference key="1">
    <citation type="journal article" date="1990" name="Curr. Top. Microbiol. Immunol.">
        <title>Analysis of the protein-coding content of the sequence of human cytomegalovirus strain AD169.</title>
        <authorList>
            <person name="Chee M.S."/>
            <person name="Bankier A.T."/>
            <person name="Beck S."/>
            <person name="Bohni R."/>
            <person name="Brown C.M."/>
            <person name="Cerny R."/>
            <person name="Horsnell T."/>
            <person name="Hutchison C.A. III"/>
            <person name="Kouzarides T."/>
            <person name="Martignetti J.A."/>
            <person name="Preddie E."/>
            <person name="Satchwell S.C."/>
            <person name="Tomlinson P."/>
            <person name="Weston K.M."/>
            <person name="Barrell B.G."/>
        </authorList>
    </citation>
    <scope>NUCLEOTIDE SEQUENCE [LARGE SCALE GENOMIC DNA]</scope>
</reference>
<proteinExistence type="predicted"/>
<gene>
    <name type="primary">UL129</name>
</gene>
<organismHost>
    <name type="scientific">Homo sapiens</name>
    <name type="common">Human</name>
    <dbReference type="NCBI Taxonomy" id="9606"/>
</organismHost>
<feature type="chain" id="PRO_0000115364" description="Uncharacterized protein UL129">
    <location>
        <begin position="1"/>
        <end position="116"/>
    </location>
</feature>
<name>UL129_HCMVA</name>
<organism>
    <name type="scientific">Human cytomegalovirus (strain AD169)</name>
    <name type="common">HHV-5</name>
    <name type="synonym">Human herpesvirus 5</name>
    <dbReference type="NCBI Taxonomy" id="10360"/>
    <lineage>
        <taxon>Viruses</taxon>
        <taxon>Duplodnaviria</taxon>
        <taxon>Heunggongvirae</taxon>
        <taxon>Peploviricota</taxon>
        <taxon>Herviviricetes</taxon>
        <taxon>Herpesvirales</taxon>
        <taxon>Orthoherpesviridae</taxon>
        <taxon>Betaherpesvirinae</taxon>
        <taxon>Cytomegalovirus</taxon>
        <taxon>Cytomegalovirus humanbeta5</taxon>
        <taxon>Human cytomegalovirus</taxon>
    </lineage>
</organism>
<dbReference type="EMBL" id="X17403">
    <property type="protein sequence ID" value="CAA35331.1"/>
    <property type="molecule type" value="Genomic_DNA"/>
</dbReference>
<dbReference type="PIR" id="S09895">
    <property type="entry name" value="S09895"/>
</dbReference>
<dbReference type="SMR" id="P16838"/>
<dbReference type="Proteomes" id="UP000008991">
    <property type="component" value="Segment"/>
</dbReference>
<dbReference type="GO" id="GO:0044650">
    <property type="term" value="P:adhesion of symbiont to host cell"/>
    <property type="evidence" value="ECO:0000269"/>
    <property type="project" value="SigSci"/>
</dbReference>
<sequence>PDLHLLYPSQSHRLSPSRAQGILKTARHESQRPDAVLDDVVAAIGSQPRAAGARRRMLRIHKRQPPAGTLLRFQNVQSLHRRVRIFMIVCVLWCVWICLSTFLIAMFHRRSSGMPE</sequence>